<accession>P00770</accession>
<reference key="1">
    <citation type="journal article" date="1987" name="J. Biol. Chem.">
        <title>Cloning of the mast cell protease, RMCP II. Evidence for cell-specific expression and a multi-gene family.</title>
        <authorList>
            <person name="Benfey P.N."/>
            <person name="Yin F.H."/>
            <person name="Leder P."/>
        </authorList>
    </citation>
    <scope>NUCLEOTIDE SEQUENCE [GENOMIC DNA]</scope>
</reference>
<reference key="2">
    <citation type="journal article" date="1978" name="Biochemistry">
        <title>Covalent structure of a group-specific protease from rat small intestine. Appendix: crystallographic data for a group specific protease from rat intestine.</title>
        <authorList>
            <person name="Woodbury R.G."/>
            <person name="Katunuma N."/>
            <person name="Kobayashi K."/>
            <person name="Titani K."/>
            <person name="Neurath H."/>
        </authorList>
    </citation>
    <scope>PROTEIN SEQUENCE OF 21-244</scope>
</reference>
<reference key="3">
    <citation type="journal article" date="1988" name="Biochemistry">
        <title>The structure of rat mast cell protease II at 1.9-A resolution.</title>
        <authorList>
            <person name="Remington S.J."/>
            <person name="Woodbury R.G."/>
            <person name="Reynolds R.A."/>
            <person name="Matthews B.W."/>
            <person name="Neurath H."/>
        </authorList>
    </citation>
    <scope>X-RAY CRYSTALLOGRAPHY (1.9 ANGSTROMS)</scope>
</reference>
<comment type="function">
    <text>This enzyme, isolated from small intestine, specifically inactivates the apo forms of a certain group of intracellular pyridoxal phosphate-requiring enzymes. It has chymotrypsin-like specificity towards small substrates.</text>
</comment>
<comment type="similarity">
    <text evidence="1">Belongs to the peptidase S1 family. Granzyme subfamily.</text>
</comment>
<proteinExistence type="evidence at protein level"/>
<evidence type="ECO:0000255" key="1">
    <source>
        <dbReference type="PROSITE-ProRule" id="PRU00274"/>
    </source>
</evidence>
<evidence type="ECO:0000269" key="2">
    <source>
    </source>
</evidence>
<evidence type="ECO:0000305" key="3"/>
<evidence type="ECO:0007829" key="4">
    <source>
        <dbReference type="PDB" id="3RP2"/>
    </source>
</evidence>
<feature type="signal peptide">
    <location>
        <begin position="1"/>
        <end position="18"/>
    </location>
</feature>
<feature type="propeptide" id="PRO_0000027441" description="Activation peptide" evidence="2">
    <location>
        <begin position="19"/>
        <end position="20"/>
    </location>
</feature>
<feature type="chain" id="PRO_0000027442" description="Mast cell protease 2">
    <location>
        <begin position="21"/>
        <end position="247"/>
    </location>
</feature>
<feature type="domain" description="Peptidase S1" evidence="1">
    <location>
        <begin position="21"/>
        <end position="244"/>
    </location>
</feature>
<feature type="active site" description="Charge relay system">
    <location>
        <position position="65"/>
    </location>
</feature>
<feature type="active site" description="Charge relay system">
    <location>
        <position position="109"/>
    </location>
</feature>
<feature type="active site" description="Charge relay system">
    <location>
        <position position="202"/>
    </location>
</feature>
<feature type="disulfide bond">
    <location>
        <begin position="50"/>
        <end position="66"/>
    </location>
</feature>
<feature type="disulfide bond">
    <location>
        <begin position="143"/>
        <end position="208"/>
    </location>
</feature>
<feature type="disulfide bond">
    <location>
        <begin position="174"/>
        <end position="187"/>
    </location>
</feature>
<feature type="sequence conflict" description="In Ref. 2; AA sequence." evidence="3" ref="2">
    <original>W</original>
    <variation>T</variation>
    <location>
        <position position="238"/>
    </location>
</feature>
<feature type="strand" evidence="4">
    <location>
        <begin position="35"/>
        <end position="41"/>
    </location>
</feature>
<feature type="strand" evidence="4">
    <location>
        <begin position="47"/>
        <end position="62"/>
    </location>
</feature>
<feature type="helix" evidence="4">
    <location>
        <begin position="64"/>
        <end position="66"/>
    </location>
</feature>
<feature type="strand" evidence="4">
    <location>
        <begin position="69"/>
        <end position="76"/>
    </location>
</feature>
<feature type="strand" evidence="4">
    <location>
        <begin position="88"/>
        <end position="97"/>
    </location>
</feature>
<feature type="strand" evidence="4">
    <location>
        <begin position="103"/>
        <end position="105"/>
    </location>
</feature>
<feature type="strand" evidence="4">
    <location>
        <begin position="111"/>
        <end position="117"/>
    </location>
</feature>
<feature type="strand" evidence="4">
    <location>
        <begin position="142"/>
        <end position="152"/>
    </location>
</feature>
<feature type="strand" evidence="4">
    <location>
        <begin position="155"/>
        <end position="157"/>
    </location>
</feature>
<feature type="strand" evidence="4">
    <location>
        <begin position="162"/>
        <end position="169"/>
    </location>
</feature>
<feature type="helix" evidence="4">
    <location>
        <begin position="171"/>
        <end position="173"/>
    </location>
</feature>
<feature type="turn" evidence="4">
    <location>
        <begin position="174"/>
        <end position="178"/>
    </location>
</feature>
<feature type="turn" evidence="4">
    <location>
        <begin position="182"/>
        <end position="184"/>
    </location>
</feature>
<feature type="strand" evidence="4">
    <location>
        <begin position="185"/>
        <end position="188"/>
    </location>
</feature>
<feature type="turn" evidence="4">
    <location>
        <begin position="199"/>
        <end position="203"/>
    </location>
</feature>
<feature type="strand" evidence="4">
    <location>
        <begin position="205"/>
        <end position="208"/>
    </location>
</feature>
<feature type="strand" evidence="4">
    <location>
        <begin position="211"/>
        <end position="218"/>
    </location>
</feature>
<feature type="strand" evidence="4">
    <location>
        <begin position="227"/>
        <end position="231"/>
    </location>
</feature>
<feature type="helix" evidence="4">
    <location>
        <begin position="232"/>
        <end position="243"/>
    </location>
</feature>
<gene>
    <name type="primary">Mcpt2</name>
</gene>
<protein>
    <recommendedName>
        <fullName>Mast cell protease 2</fullName>
        <shortName>rMCP-2</shortName>
        <ecNumber>3.4.21.-</ecNumber>
    </recommendedName>
    <alternativeName>
        <fullName>Group-specific protease</fullName>
    </alternativeName>
    <alternativeName>
        <fullName>Mast cell protease II</fullName>
        <shortName>rMCP-II</shortName>
    </alternativeName>
</protein>
<keyword id="KW-0002">3D-structure</keyword>
<keyword id="KW-0903">Direct protein sequencing</keyword>
<keyword id="KW-1015">Disulfide bond</keyword>
<keyword id="KW-0378">Hydrolase</keyword>
<keyword id="KW-0645">Protease</keyword>
<keyword id="KW-1185">Reference proteome</keyword>
<keyword id="KW-0720">Serine protease</keyword>
<keyword id="KW-0732">Signal</keyword>
<keyword id="KW-0865">Zymogen</keyword>
<organism>
    <name type="scientific">Rattus norvegicus</name>
    <name type="common">Rat</name>
    <dbReference type="NCBI Taxonomy" id="10116"/>
    <lineage>
        <taxon>Eukaryota</taxon>
        <taxon>Metazoa</taxon>
        <taxon>Chordata</taxon>
        <taxon>Craniata</taxon>
        <taxon>Vertebrata</taxon>
        <taxon>Euteleostomi</taxon>
        <taxon>Mammalia</taxon>
        <taxon>Eutheria</taxon>
        <taxon>Euarchontoglires</taxon>
        <taxon>Glires</taxon>
        <taxon>Rodentia</taxon>
        <taxon>Myomorpha</taxon>
        <taxon>Muroidea</taxon>
        <taxon>Muridae</taxon>
        <taxon>Murinae</taxon>
        <taxon>Rattus</taxon>
    </lineage>
</organism>
<sequence>MQALLFLMALLLPSGAGAEEIIGGVESIPHSRPYMAHLDIVTEKGLRVICGGFLISRQFVLTAAHCKGREITVILGAHDVRKRESTQQKIKVEKQIIHESYNSVPNLHDIMLLKLEKKVELTPAVNVVPLPSPSDFIHPGAMCWAAGWGKTGVRDPTSYTLREVELRIMDEKACVDYRYYEYKFQVCVGSPTTLRAAFMGDSGGPLLCAGVAHGIVSYGHPDAKPPAIFTRVSTYVPWINAVINTSS</sequence>
<name>MCPT2_RAT</name>
<dbReference type="EC" id="3.4.21.-"/>
<dbReference type="EMBL" id="J02712">
    <property type="protein sequence ID" value="AAA66284.1"/>
    <property type="molecule type" value="Genomic_DNA"/>
</dbReference>
<dbReference type="PIR" id="A29548">
    <property type="entry name" value="PRRTG"/>
</dbReference>
<dbReference type="PDB" id="3RP2">
    <property type="method" value="X-ray"/>
    <property type="resolution" value="1.90 A"/>
    <property type="chains" value="A/B=21-244"/>
</dbReference>
<dbReference type="PDBsum" id="3RP2"/>
<dbReference type="SMR" id="P00770"/>
<dbReference type="FunCoup" id="P00770">
    <property type="interactions" value="24"/>
</dbReference>
<dbReference type="STRING" id="10116.ENSRNOP00000027931"/>
<dbReference type="MEROPS" id="S01.141"/>
<dbReference type="PhosphoSitePlus" id="P00770"/>
<dbReference type="PaxDb" id="10116-ENSRNOP00000027988"/>
<dbReference type="Ensembl" id="ENSRNOT00000091757.2">
    <property type="protein sequence ID" value="ENSRNOP00000069470.1"/>
    <property type="gene ID" value="ENSRNOG00000020625.7"/>
</dbReference>
<dbReference type="KEGG" id="rno:29266"/>
<dbReference type="UCSC" id="RGD:621058">
    <property type="organism name" value="rat"/>
</dbReference>
<dbReference type="AGR" id="RGD:621058"/>
<dbReference type="CTD" id="17224"/>
<dbReference type="RGD" id="621058">
    <property type="gene designation" value="Mcpt2"/>
</dbReference>
<dbReference type="VEuPathDB" id="HostDB:ENSRNOG00000031304"/>
<dbReference type="eggNOG" id="KOG3627">
    <property type="taxonomic scope" value="Eukaryota"/>
</dbReference>
<dbReference type="GeneTree" id="ENSGT01030000234551"/>
<dbReference type="HOGENOM" id="CLU_006842_1_0_1"/>
<dbReference type="InParanoid" id="P00770"/>
<dbReference type="OrthoDB" id="5565075at2759"/>
<dbReference type="PhylomeDB" id="P00770"/>
<dbReference type="TreeFam" id="TF333630"/>
<dbReference type="EvolutionaryTrace" id="P00770"/>
<dbReference type="PRO" id="PR:P00770"/>
<dbReference type="Proteomes" id="UP000002494">
    <property type="component" value="Chromosome 15"/>
</dbReference>
<dbReference type="Bgee" id="ENSRNOG00000020625">
    <property type="expression patterns" value="Expressed in stomach and 14 other cell types or tissues"/>
</dbReference>
<dbReference type="ExpressionAtlas" id="P00770">
    <property type="expression patterns" value="baseline and differential"/>
</dbReference>
<dbReference type="GO" id="GO:0005615">
    <property type="term" value="C:extracellular space"/>
    <property type="evidence" value="ECO:0000318"/>
    <property type="project" value="GO_Central"/>
</dbReference>
<dbReference type="GO" id="GO:0004252">
    <property type="term" value="F:serine-type endopeptidase activity"/>
    <property type="evidence" value="ECO:0000318"/>
    <property type="project" value="GO_Central"/>
</dbReference>
<dbReference type="GO" id="GO:0051604">
    <property type="term" value="P:protein maturation"/>
    <property type="evidence" value="ECO:0000318"/>
    <property type="project" value="GO_Central"/>
</dbReference>
<dbReference type="GO" id="GO:0006508">
    <property type="term" value="P:proteolysis"/>
    <property type="evidence" value="ECO:0007669"/>
    <property type="project" value="UniProtKB-KW"/>
</dbReference>
<dbReference type="CDD" id="cd00190">
    <property type="entry name" value="Tryp_SPc"/>
    <property type="match status" value="1"/>
</dbReference>
<dbReference type="FunFam" id="2.40.10.10:FF:000014">
    <property type="entry name" value="Complement factor D"/>
    <property type="match status" value="1"/>
</dbReference>
<dbReference type="FunFam" id="2.40.10.10:FF:000068">
    <property type="entry name" value="transmembrane protease serine 2"/>
    <property type="match status" value="1"/>
</dbReference>
<dbReference type="Gene3D" id="2.40.10.10">
    <property type="entry name" value="Trypsin-like serine proteases"/>
    <property type="match status" value="2"/>
</dbReference>
<dbReference type="InterPro" id="IPR009003">
    <property type="entry name" value="Peptidase_S1_PA"/>
</dbReference>
<dbReference type="InterPro" id="IPR043504">
    <property type="entry name" value="Peptidase_S1_PA_chymotrypsin"/>
</dbReference>
<dbReference type="InterPro" id="IPR001314">
    <property type="entry name" value="Peptidase_S1A"/>
</dbReference>
<dbReference type="InterPro" id="IPR001254">
    <property type="entry name" value="Trypsin_dom"/>
</dbReference>
<dbReference type="InterPro" id="IPR018114">
    <property type="entry name" value="TRYPSIN_HIS"/>
</dbReference>
<dbReference type="InterPro" id="IPR033116">
    <property type="entry name" value="TRYPSIN_SER"/>
</dbReference>
<dbReference type="PANTHER" id="PTHR24271:SF23">
    <property type="entry name" value="CHYMASE 2, MAST CELL-RELATED"/>
    <property type="match status" value="1"/>
</dbReference>
<dbReference type="PANTHER" id="PTHR24271">
    <property type="entry name" value="KALLIKREIN-RELATED"/>
    <property type="match status" value="1"/>
</dbReference>
<dbReference type="Pfam" id="PF00089">
    <property type="entry name" value="Trypsin"/>
    <property type="match status" value="1"/>
</dbReference>
<dbReference type="PRINTS" id="PR00722">
    <property type="entry name" value="CHYMOTRYPSIN"/>
</dbReference>
<dbReference type="SMART" id="SM00020">
    <property type="entry name" value="Tryp_SPc"/>
    <property type="match status" value="1"/>
</dbReference>
<dbReference type="SUPFAM" id="SSF50494">
    <property type="entry name" value="Trypsin-like serine proteases"/>
    <property type="match status" value="1"/>
</dbReference>
<dbReference type="PROSITE" id="PS50240">
    <property type="entry name" value="TRYPSIN_DOM"/>
    <property type="match status" value="1"/>
</dbReference>
<dbReference type="PROSITE" id="PS00134">
    <property type="entry name" value="TRYPSIN_HIS"/>
    <property type="match status" value="1"/>
</dbReference>
<dbReference type="PROSITE" id="PS00135">
    <property type="entry name" value="TRYPSIN_SER"/>
    <property type="match status" value="1"/>
</dbReference>